<sequence>MDKYDKNVPSDYDGLFQKAADANGVSYDLLRKVAWTESRFVPTAKSKTGPLGMMQFTKATAKALGLRVTDGPDDDRLNPELAINAAAKQLAGLVGKFDGDELKAALAYNQGEGRLGNPQLEAYSKGDFASISEEGRNYMRNLLDVAKSPMAGQLETFGGITPKGKGIPAEVGLAGIGHKQKVTQELPESTSFDVKGIEQEATAKPFAKDFWETHGETLDEYNSRSTFFGFKNAAEAELSNSVAGMAFRAGRLDNGFDVFKDTITPTRWNSHIWTPEELEKIRTEVKNPAYINVVTGGSPENLDDLIKLANENFENDSRAAEAGLGAKLSAGIIGAGVDPLSYVPMVGVTGKGFKLINKALVVGAESAALNVASEGLRTSVAGGDADYAGAALGGFVFGAGMSAISDAVAAGLKRSKPEAEFDNEFIGPMMRLEARETARNANSADLSRMNTENMKFEGEHNGVPYEDLPTERGAVVLHDGSVLSASNPINPKTLKEFSEVDPEKAARGIKLAGFTEIGLKTLGSDDADIRRVAIDLVRSPTGMQSGASGKFGATASDIHERLHGTDQRTYNDLYKAMSDAMKDPEFSTGGAKMSREETRYTIYRRAALAIERPELQKALTPSERIVMDIIKRHFDTKRELMENPAIFGNTKAVSIFPESRHKGTYVPHVYDRHAKALMIQRYGAEGLQEGIARSWMNSYVSRPEVKARVDEMLKELHGVKEVTPEMVEKYAMDKAYGISHSDQFTNSSIIEENIEGLVGIENNSFLEARNLFDSDLSITMPDGQQFSVNDLRDFDMFRIMPAYDRRVNGDIAIMGSTGKTTKELKDEILALKAKAEGDGKKTGEVHALMDTVKILTGRARRNQDTVWETSLRAINDLGFFAKNAYMGAQNITEIAGMIVTGNVRALGHGIPILRDTLYKSKPVSAKELKELHASLFGKEVDQLIRPKRADIVQRLREATDTGPAVANIVGTLKYSTQELAARSPWTKLLNGTTNYLLDAARQGMLGDVISATLTGKTTRWEKEGFLRGASVTPEQMAGIKSLIKEHMVRGEDGKFTVKDKQAFSMDPRAMDLWRLADKVADEAMLRPHKVSLQDSHAFGALGKMVMQFKSFTIKSLNSKFLRTFYDGYKNNRAIDAALSIITSMGLAGGFYAMAAHVKAYALPKEKRKEYLERALDPTMIAHAALSRSSQLGAPLAMVDLVGGVLGFESSKMARSTILPKDTVKERDPNKPYTSREVMGAMGSNLLEQMPSAGFVANVGATLMNAAGVVNSPNKATEQDFMTGLMNSTKELVPNDPLTQQLVLKIYEANGVNLRERRK</sequence>
<organismHost>
    <name type="scientific">Escherichia coli</name>
    <dbReference type="NCBI Taxonomy" id="562"/>
</organismHost>
<organism>
    <name type="scientific">Escherichia phage T7</name>
    <name type="common">Bacteriophage T7</name>
    <dbReference type="NCBI Taxonomy" id="10760"/>
    <lineage>
        <taxon>Viruses</taxon>
        <taxon>Duplodnaviria</taxon>
        <taxon>Heunggongvirae</taxon>
        <taxon>Uroviricota</taxon>
        <taxon>Caudoviricetes</taxon>
        <taxon>Autographiviridae</taxon>
        <taxon>Studiervirinae</taxon>
        <taxon>Teseptimavirus</taxon>
        <taxon>Teseptimavirus T7</taxon>
    </lineage>
</organism>
<gene>
    <name type="ordered locus">16</name>
</gene>
<proteinExistence type="evidence at protein level"/>
<keyword id="KW-0002">3D-structure</keyword>
<keyword id="KW-0929">Antimicrobial</keyword>
<keyword id="KW-0081">Bacteriolytic enzyme</keyword>
<keyword id="KW-1235">Degradation of host cell envelope components during virus entry</keyword>
<keyword id="KW-1236">Degradation of host peptidoglycans during virus entry</keyword>
<keyword id="KW-1030">Host cell inner membrane</keyword>
<keyword id="KW-1032">Host cell membrane</keyword>
<keyword id="KW-1043">Host membrane</keyword>
<keyword id="KW-0378">Hydrolase</keyword>
<keyword id="KW-0456">Lyase</keyword>
<keyword id="KW-0472">Membrane</keyword>
<keyword id="KW-1185">Reference proteome</keyword>
<keyword id="KW-0812">Transmembrane</keyword>
<keyword id="KW-1133">Transmembrane helix</keyword>
<keyword id="KW-1171">Viral genome ejection through host cell envelope</keyword>
<keyword id="KW-1162">Viral penetration into host cytoplasm</keyword>
<keyword id="KW-1244">Viral short tail ejection system</keyword>
<keyword id="KW-0946">Virion</keyword>
<keyword id="KW-1160">Virus entry into host cell</keyword>
<accession>P03726</accession>
<reference key="1">
    <citation type="journal article" date="1983" name="J. Mol. Biol.">
        <title>Complete nucleotide sequence of bacteriophage T7 DNA and the locations of T7 genetic elements.</title>
        <authorList>
            <person name="Dunn J.J."/>
            <person name="Studier F.W."/>
        </authorList>
    </citation>
    <scope>NUCLEOTIDE SEQUENCE [LARGE SCALE GENOMIC DNA]</scope>
</reference>
<reference key="2">
    <citation type="journal article" date="1994" name="Trends Biochem. Sci.">
        <title>A conserved domain in putative bacterial and bacteriophage transglycosylases.</title>
        <authorList>
            <person name="Koonin E.V."/>
            <person name="Rudd K.E."/>
        </authorList>
    </citation>
    <scope>DOMAIN</scope>
</reference>
<reference key="3">
    <citation type="journal article" date="2000" name="J. Mol. Biol.">
        <title>The internal head protein Gp16 controls DNA ejection from the bacteriophage T7 virion.</title>
        <authorList>
            <person name="Struthers-Schlinke J.S."/>
            <person name="Robins W.P."/>
            <person name="Kemp P."/>
            <person name="Molineux I.J."/>
        </authorList>
    </citation>
    <scope>FUNCTION</scope>
    <scope>CATALYTIC ACTIVITY</scope>
</reference>
<reference key="4">
    <citation type="journal article" date="2004" name="Mol. Microbiol.">
        <title>Peptidoglycan hydrolytic activities associated with bacteriophage virions.</title>
        <authorList>
            <person name="Moak M."/>
            <person name="Molineux I.J."/>
        </authorList>
    </citation>
    <scope>FUNCTION</scope>
    <scope>DOMAIN</scope>
</reference>
<reference key="5">
    <citation type="journal article" date="2010" name="Virology">
        <title>Gp15 and gp16 cooperate in translocating bacteriophage T7 DNA into the infected cell.</title>
        <authorList>
            <person name="Chang C.Y."/>
            <person name="Kemp P."/>
            <person name="Molineux I.J."/>
        </authorList>
    </citation>
    <scope>FUNCTION</scope>
</reference>
<reference key="6">
    <citation type="journal article" date="2013" name="Proc. Natl. Acad. Sci. U.S.A.">
        <title>Visualization of uncorrelated, tandem symmetry mismatches in the internal genome packaging apparatus of bacteriophage T7.</title>
        <authorList>
            <person name="Guo F."/>
            <person name="Liu Z."/>
            <person name="Vago F."/>
            <person name="Ren Y."/>
            <person name="Wu W."/>
            <person name="Wright E.T."/>
            <person name="Serwer P."/>
            <person name="Jiang W."/>
        </authorList>
    </citation>
    <scope>INTERACTION WITH GP15</scope>
    <scope>SUBUNIT</scope>
</reference>
<reference key="7">
    <citation type="journal article" date="2013" name="Science">
        <title>The bacteriophage t7 virion undergoes extensive structural remodeling during infection.</title>
        <authorList>
            <person name="Hu B."/>
            <person name="Margolin W."/>
            <person name="Molineux I.J."/>
            <person name="Liu J."/>
        </authorList>
    </citation>
    <scope>SUBCELLULAR LOCATION</scope>
</reference>
<reference key="8">
    <citation type="journal article" date="2013" name="J. Biol. Chem.">
        <title>Structural characterization of the bacteriophage T7 tail machinery.</title>
        <authorList>
            <person name="Cuervo A."/>
            <person name="Pulido-Cid M."/>
            <person name="Chagoyen M."/>
            <person name="Arranz R."/>
            <person name="Gonzalez-Garcia V.A."/>
            <person name="Garcia-Doval C."/>
            <person name="Caston J.R."/>
            <person name="Valpuesta J.M."/>
            <person name="van Raaij M.J."/>
            <person name="Martin-Benito J."/>
            <person name="Carrascosa J.L."/>
        </authorList>
    </citation>
    <scope>SUBCELLULAR LOCATION</scope>
</reference>
<reference key="9">
    <citation type="journal article" date="2013" name="Crit. Rev. Microbiol.">
        <title>Bacteriophage virion-associated peptidoglycan hydrolases: potential new enzybiotics.</title>
        <authorList>
            <person name="Rodriguez-Rubio L."/>
            <person name="Martinez B."/>
            <person name="Donovan D.M."/>
            <person name="Rodriguez A."/>
            <person name="Garcia P."/>
        </authorList>
    </citation>
    <scope>REVIEW</scope>
</reference>
<reference key="10">
    <citation type="journal article" date="2015" name="Virology">
        <title>The T7 ejection nanomachine components gp15-gp16 form a spiral ring complex that binds DNA and a lipid membrane.</title>
        <authorList>
            <person name="Lupo D."/>
            <person name="Leptihn S."/>
            <person name="Nagler G."/>
            <person name="Haase M."/>
            <person name="Molineux I.J."/>
            <person name="Kuhn A."/>
        </authorList>
    </citation>
    <scope>INTERACTION WITH GP15</scope>
    <scope>FUNCTION</scope>
    <scope>TOPOLOGY</scope>
</reference>
<dbReference type="EC" id="4.2.2.n1" evidence="1 3"/>
<dbReference type="EMBL" id="V01146">
    <property type="protein sequence ID" value="CAA24434.1"/>
    <property type="molecule type" value="Genomic_DNA"/>
</dbReference>
<dbReference type="PIR" id="A04352">
    <property type="entry name" value="HIBPD7"/>
</dbReference>
<dbReference type="RefSeq" id="NP_042004.1">
    <property type="nucleotide sequence ID" value="NC_001604.1"/>
</dbReference>
<dbReference type="PDB" id="6YT5">
    <property type="method" value="EM"/>
    <property type="resolution" value="3.00 A"/>
    <property type="chains" value="G/H/I/J/K/L=1-1318"/>
</dbReference>
<dbReference type="PDB" id="7EYB">
    <property type="method" value="EM"/>
    <property type="resolution" value="3.70 A"/>
    <property type="chains" value="I/J/K/L=1-1318"/>
</dbReference>
<dbReference type="PDB" id="7K5C">
    <property type="method" value="EM"/>
    <property type="resolution" value="2.70 A"/>
    <property type="chains" value="B/D/F/G/J/L=1-1318"/>
</dbReference>
<dbReference type="PDB" id="9JYY">
    <property type="method" value="EM"/>
    <property type="resolution" value="3.00 A"/>
    <property type="chains" value="I/J/K/L=1-1318"/>
</dbReference>
<dbReference type="PDBsum" id="6YT5"/>
<dbReference type="PDBsum" id="7EYB"/>
<dbReference type="PDBsum" id="7K5C"/>
<dbReference type="PDBsum" id="9JYY"/>
<dbReference type="EMDB" id="EMD-10912"/>
<dbReference type="EMDB" id="EMD-22680"/>
<dbReference type="EMDB" id="EMD-5566"/>
<dbReference type="EMDB" id="EMD-5567"/>
<dbReference type="EMDB" id="EMD-5568"/>
<dbReference type="EMDB" id="EMD-5569"/>
<dbReference type="EMDB" id="EMD-5570"/>
<dbReference type="EMDB" id="EMD-5571"/>
<dbReference type="EMDB" id="EMD-5572"/>
<dbReference type="EMDB" id="EMD-5573"/>
<dbReference type="EMDB" id="EMD-61909"/>
<dbReference type="SMR" id="P03726"/>
<dbReference type="IntAct" id="P03726">
    <property type="interactions" value="1"/>
</dbReference>
<dbReference type="MINT" id="P03726"/>
<dbReference type="CAZy" id="GH23">
    <property type="family name" value="Glycoside Hydrolase Family 23"/>
</dbReference>
<dbReference type="TCDB" id="3.A.17.1.1">
    <property type="family name" value="the phage t7 injectisome (t7 injectisome) family"/>
</dbReference>
<dbReference type="KEGG" id="vg:1261031"/>
<dbReference type="Proteomes" id="UP000000840">
    <property type="component" value="Genome"/>
</dbReference>
<dbReference type="GO" id="GO:0020002">
    <property type="term" value="C:host cell plasma membrane"/>
    <property type="evidence" value="ECO:0007669"/>
    <property type="project" value="UniProtKB-SubCell"/>
</dbReference>
<dbReference type="GO" id="GO:0016020">
    <property type="term" value="C:membrane"/>
    <property type="evidence" value="ECO:0007669"/>
    <property type="project" value="UniProtKB-KW"/>
</dbReference>
<dbReference type="GO" id="GO:0044423">
    <property type="term" value="C:virion component"/>
    <property type="evidence" value="ECO:0007669"/>
    <property type="project" value="UniProtKB-UniRule"/>
</dbReference>
<dbReference type="GO" id="GO:0016787">
    <property type="term" value="F:hydrolase activity"/>
    <property type="evidence" value="ECO:0007669"/>
    <property type="project" value="UniProtKB-KW"/>
</dbReference>
<dbReference type="GO" id="GO:0008933">
    <property type="term" value="F:peptidoglycan lytic transglycosylase activity"/>
    <property type="evidence" value="ECO:0007669"/>
    <property type="project" value="UniProtKB-UniRule"/>
</dbReference>
<dbReference type="GO" id="GO:0042742">
    <property type="term" value="P:defense response to bacterium"/>
    <property type="evidence" value="ECO:0007669"/>
    <property type="project" value="UniProtKB-KW"/>
</dbReference>
<dbReference type="GO" id="GO:0031640">
    <property type="term" value="P:killing of cells of another organism"/>
    <property type="evidence" value="ECO:0007669"/>
    <property type="project" value="UniProtKB-KW"/>
</dbReference>
<dbReference type="GO" id="GO:0000270">
    <property type="term" value="P:peptidoglycan metabolic process"/>
    <property type="evidence" value="ECO:0007669"/>
    <property type="project" value="InterPro"/>
</dbReference>
<dbReference type="GO" id="GO:0044409">
    <property type="term" value="P:symbiont entry into host"/>
    <property type="evidence" value="ECO:0000314"/>
    <property type="project" value="UniProtKB"/>
</dbReference>
<dbReference type="GO" id="GO:0098994">
    <property type="term" value="P:symbiont entry into host cell via disruption of host cell envelope"/>
    <property type="evidence" value="ECO:0007669"/>
    <property type="project" value="UniProtKB-KW"/>
</dbReference>
<dbReference type="GO" id="GO:0098932">
    <property type="term" value="P:symbiont entry into host cell via disruption of host cell wall peptidoglycan"/>
    <property type="evidence" value="ECO:0007669"/>
    <property type="project" value="UniProtKB-UniRule"/>
</dbReference>
<dbReference type="GO" id="GO:0039678">
    <property type="term" value="P:symbiont genome ejection through host cell envelope"/>
    <property type="evidence" value="ECO:0000315"/>
    <property type="project" value="UniProtKB"/>
</dbReference>
<dbReference type="GO" id="GO:0099002">
    <property type="term" value="P:symbiont genome ejection through host cell envelope, short tail mechanism"/>
    <property type="evidence" value="ECO:0007669"/>
    <property type="project" value="UniProtKB-UniRule"/>
</dbReference>
<dbReference type="CDD" id="cd00254">
    <property type="entry name" value="LT-like"/>
    <property type="match status" value="1"/>
</dbReference>
<dbReference type="FunFam" id="1.10.530.10:FF:000034">
    <property type="entry name" value="Peptidoglycan transglycosylase gp16"/>
    <property type="match status" value="1"/>
</dbReference>
<dbReference type="Gene3D" id="1.10.530.10">
    <property type="match status" value="1"/>
</dbReference>
<dbReference type="HAMAP" id="MF_04121">
    <property type="entry name" value="TRANSGLYCOSYLASE_T7"/>
    <property type="match status" value="1"/>
</dbReference>
<dbReference type="InterPro" id="IPR038994">
    <property type="entry name" value="Gp16"/>
</dbReference>
<dbReference type="InterPro" id="IPR023346">
    <property type="entry name" value="Lysozyme-like_dom_sf"/>
</dbReference>
<dbReference type="InterPro" id="IPR000189">
    <property type="entry name" value="Transglyc_AS"/>
</dbReference>
<dbReference type="InterPro" id="IPR008258">
    <property type="entry name" value="Transglycosylase_SLT_dom_1"/>
</dbReference>
<dbReference type="PANTHER" id="PTHR37423:SF2">
    <property type="entry name" value="MEMBRANE-BOUND LYTIC MUREIN TRANSGLYCOSYLASE C"/>
    <property type="match status" value="1"/>
</dbReference>
<dbReference type="PANTHER" id="PTHR37423">
    <property type="entry name" value="SOLUBLE LYTIC MUREIN TRANSGLYCOSYLASE-RELATED"/>
    <property type="match status" value="1"/>
</dbReference>
<dbReference type="Pfam" id="PF01464">
    <property type="entry name" value="SLT"/>
    <property type="match status" value="1"/>
</dbReference>
<dbReference type="SUPFAM" id="SSF53955">
    <property type="entry name" value="Lysozyme-like"/>
    <property type="match status" value="1"/>
</dbReference>
<dbReference type="PROSITE" id="PS00922">
    <property type="entry name" value="TRANSGLYCOSYLASE"/>
    <property type="match status" value="1"/>
</dbReference>
<feature type="chain" id="PRO_0000196560" description="Peptidoglycan transglycosylase gp16">
    <location>
        <begin position="1"/>
        <end position="1318"/>
    </location>
</feature>
<feature type="topological domain" description="Periplasmic" evidence="1 9">
    <location>
        <begin position="1"/>
        <end position="1136"/>
    </location>
</feature>
<feature type="transmembrane region" description="Helical" evidence="1">
    <location>
        <begin position="1137"/>
        <end position="1157"/>
    </location>
</feature>
<feature type="topological domain" description="Cytoplasmic" evidence="1 9">
    <location>
        <begin position="1158"/>
        <end position="1318"/>
    </location>
</feature>
<feature type="region of interest" description="Transglycosylase SLT-type domain" evidence="1">
    <location>
        <begin position="24"/>
        <end position="111"/>
    </location>
</feature>
<feature type="region of interest" description="Essential for viral DNA translocation" evidence="1 4">
    <location>
        <begin position="1314"/>
        <end position="1318"/>
    </location>
</feature>
<feature type="active site" evidence="1">
    <location>
        <position position="37"/>
    </location>
</feature>
<feature type="helix" evidence="10">
    <location>
        <begin position="3"/>
        <end position="5"/>
    </location>
</feature>
<feature type="helix" evidence="10">
    <location>
        <begin position="16"/>
        <end position="23"/>
    </location>
</feature>
<feature type="helix" evidence="10">
    <location>
        <begin position="27"/>
        <end position="38"/>
    </location>
</feature>
<feature type="strand" evidence="10">
    <location>
        <begin position="46"/>
        <end position="48"/>
    </location>
</feature>
<feature type="strand" evidence="10">
    <location>
        <begin position="52"/>
        <end position="54"/>
    </location>
</feature>
<feature type="helix" evidence="10">
    <location>
        <begin position="58"/>
        <end position="63"/>
    </location>
</feature>
<feature type="strand" evidence="10">
    <location>
        <begin position="69"/>
        <end position="73"/>
    </location>
</feature>
<feature type="helix" evidence="10">
    <location>
        <begin position="79"/>
        <end position="95"/>
    </location>
</feature>
<feature type="turn" evidence="10">
    <location>
        <begin position="96"/>
        <end position="98"/>
    </location>
</feature>
<feature type="helix" evidence="10">
    <location>
        <begin position="104"/>
        <end position="106"/>
    </location>
</feature>
<feature type="helix" evidence="10">
    <location>
        <begin position="107"/>
        <end position="110"/>
    </location>
</feature>
<feature type="turn" evidence="10">
    <location>
        <begin position="114"/>
        <end position="116"/>
    </location>
</feature>
<feature type="helix" evidence="10">
    <location>
        <begin position="117"/>
        <end position="125"/>
    </location>
</feature>
<feature type="helix" evidence="10">
    <location>
        <begin position="128"/>
        <end position="130"/>
    </location>
</feature>
<feature type="helix" evidence="10">
    <location>
        <begin position="133"/>
        <end position="140"/>
    </location>
</feature>
<feature type="strand" evidence="10">
    <location>
        <begin position="143"/>
        <end position="145"/>
    </location>
</feature>
<feature type="helix" evidence="10">
    <location>
        <begin position="151"/>
        <end position="155"/>
    </location>
</feature>
<feature type="helix" evidence="10">
    <location>
        <begin position="169"/>
        <end position="172"/>
    </location>
</feature>
<feature type="turn" evidence="10">
    <location>
        <begin position="173"/>
        <end position="175"/>
    </location>
</feature>
<feature type="helix" evidence="10">
    <location>
        <begin position="206"/>
        <end position="213"/>
    </location>
</feature>
<feature type="strand" evidence="10">
    <location>
        <begin position="214"/>
        <end position="216"/>
    </location>
</feature>
<feature type="helix" evidence="10">
    <location>
        <begin position="218"/>
        <end position="225"/>
    </location>
</feature>
<name>EXLYS_BPT7</name>
<evidence type="ECO:0000255" key="1">
    <source>
        <dbReference type="HAMAP-Rule" id="MF_04121"/>
    </source>
</evidence>
<evidence type="ECO:0000269" key="2">
    <source>
    </source>
</evidence>
<evidence type="ECO:0000269" key="3">
    <source>
    </source>
</evidence>
<evidence type="ECO:0000269" key="4">
    <source>
    </source>
</evidence>
<evidence type="ECO:0000269" key="5">
    <source>
    </source>
</evidence>
<evidence type="ECO:0000269" key="6">
    <source>
    </source>
</evidence>
<evidence type="ECO:0000269" key="7">
    <source>
    </source>
</evidence>
<evidence type="ECO:0000269" key="8">
    <source>
    </source>
</evidence>
<evidence type="ECO:0000305" key="9">
    <source>
    </source>
</evidence>
<evidence type="ECO:0007829" key="10">
    <source>
        <dbReference type="PDB" id="7K5C"/>
    </source>
</evidence>
<protein>
    <recommendedName>
        <fullName evidence="1">Peptidoglycan transglycosylase gp16</fullName>
        <ecNumber evidence="1 3">4.2.2.n1</ecNumber>
    </recommendedName>
    <alternativeName>
        <fullName evidence="1">Internal core protein gp16</fullName>
    </alternativeName>
</protein>
<comment type="function">
    <text evidence="1 2 3 4 8">Component of the cylindrical core that assembles on the inner surface of the capsid during capsid formation and plays a role in viral DNA ejection into the host cell. The inner core is composed of stacked rings of gp14, gp15 and gp16 proteins. Following binding to the host cell surface, the internal core is diassembled and gp16 is ejected along with gp14 and gp15 into the infected cell. Gp16 probably inserts in the host inner membrane and remains associated with gp15. The gp15-gp16 complex binds to both the viral DNA and the host inner membrane, probably escorting the leading end of the genome through the periplasm and controlling the extend of DNA translocated into the host cell. Functions as an exolysin that catalyzes the cleavage of the glycosidic bonds between N-acetylmuramic acid and N-acetylglucosamine residues in peptidoglycans allowing the local digestion of the bacterial peptidoglycan wall.</text>
</comment>
<comment type="catalytic activity">
    <reaction evidence="1 3">
        <text>Exolytic cleavage of the (1-&gt;4)-beta-glycosidic linkage between N-acetylmuramic acid (MurNAc) and N-acetylglucosamine (GlcNAc) residues in peptidoglycan, from either the reducing or the non-reducing ends of the peptidoglycan chains, with concomitant formation of a 1,6-anhydrobond in the MurNAc residue.</text>
        <dbReference type="EC" id="4.2.2.n1"/>
    </reaction>
</comment>
<comment type="subunit">
    <text evidence="1 6 8">Homotetramer. Interacts with gp15; after ejection the gp15-gp16 complex composed of a gp15 octamer and a gp16 tetramer probably binds both the viral DNA and the host inner membrane.</text>
</comment>
<comment type="subcellular location">
    <subcellularLocation>
        <location evidence="1 7">Virion</location>
    </subcellularLocation>
    <subcellularLocation>
        <location evidence="1 5">Host cell inner membrane</location>
        <topology evidence="1">Single-pass membrane protein</topology>
    </subcellularLocation>
    <text evidence="1 5">The gp15-gp16 complex spans the periplasm and the cytoplasmic membrane.</text>
</comment>
<comment type="domain">
    <text evidence="1 4">The N-terminus contains the transglycosylase activity (Potential). The C-terminus is essential for the viral DNA translocation into the host cytoplasm.</text>
</comment>
<comment type="similarity">
    <text evidence="1">Belongs to the transglycosylase Slt family.</text>
</comment>